<proteinExistence type="inferred from homology"/>
<comment type="function">
    <text evidence="1">An accessory protein needed during the final step in the assembly of 30S ribosomal subunit, possibly for assembly of the head region. Essential for efficient processing of 16S rRNA. May be needed both before and after RbfA during the maturation of 16S rRNA. It has affinity for free ribosomal 30S subunits but not for 70S ribosomes.</text>
</comment>
<comment type="subunit">
    <text evidence="1">Binds ribosomal protein uS19.</text>
</comment>
<comment type="subcellular location">
    <subcellularLocation>
        <location evidence="1">Cytoplasm</location>
    </subcellularLocation>
</comment>
<comment type="domain">
    <text evidence="1">The PRC barrel domain binds ribosomal protein uS19.</text>
</comment>
<comment type="similarity">
    <text evidence="1">Belongs to the RimM family.</text>
</comment>
<dbReference type="EMBL" id="AP010656">
    <property type="protein sequence ID" value="BAG83726.1"/>
    <property type="molecule type" value="Genomic_DNA"/>
</dbReference>
<dbReference type="RefSeq" id="WP_012573487.1">
    <property type="nucleotide sequence ID" value="NC_011565.1"/>
</dbReference>
<dbReference type="SMR" id="B6YRA4"/>
<dbReference type="STRING" id="511995.CFPG_463"/>
<dbReference type="KEGG" id="aps:CFPG_463"/>
<dbReference type="eggNOG" id="COG0806">
    <property type="taxonomic scope" value="Bacteria"/>
</dbReference>
<dbReference type="HOGENOM" id="CLU_077636_4_1_10"/>
<dbReference type="OrthoDB" id="9810331at2"/>
<dbReference type="Proteomes" id="UP000000723">
    <property type="component" value="Chromosome"/>
</dbReference>
<dbReference type="GO" id="GO:0005737">
    <property type="term" value="C:cytoplasm"/>
    <property type="evidence" value="ECO:0007669"/>
    <property type="project" value="UniProtKB-SubCell"/>
</dbReference>
<dbReference type="GO" id="GO:0005840">
    <property type="term" value="C:ribosome"/>
    <property type="evidence" value="ECO:0007669"/>
    <property type="project" value="InterPro"/>
</dbReference>
<dbReference type="GO" id="GO:0043022">
    <property type="term" value="F:ribosome binding"/>
    <property type="evidence" value="ECO:0007669"/>
    <property type="project" value="InterPro"/>
</dbReference>
<dbReference type="GO" id="GO:0042274">
    <property type="term" value="P:ribosomal small subunit biogenesis"/>
    <property type="evidence" value="ECO:0007669"/>
    <property type="project" value="UniProtKB-UniRule"/>
</dbReference>
<dbReference type="GO" id="GO:0006364">
    <property type="term" value="P:rRNA processing"/>
    <property type="evidence" value="ECO:0007669"/>
    <property type="project" value="UniProtKB-UniRule"/>
</dbReference>
<dbReference type="Gene3D" id="2.30.30.240">
    <property type="entry name" value="PRC-barrel domain"/>
    <property type="match status" value="1"/>
</dbReference>
<dbReference type="Gene3D" id="2.40.30.60">
    <property type="entry name" value="RimM"/>
    <property type="match status" value="1"/>
</dbReference>
<dbReference type="HAMAP" id="MF_00014">
    <property type="entry name" value="Ribosome_mat_RimM"/>
    <property type="match status" value="1"/>
</dbReference>
<dbReference type="InterPro" id="IPR011033">
    <property type="entry name" value="PRC_barrel-like_sf"/>
</dbReference>
<dbReference type="InterPro" id="IPR056792">
    <property type="entry name" value="PRC_RimM"/>
</dbReference>
<dbReference type="InterPro" id="IPR011961">
    <property type="entry name" value="RimM"/>
</dbReference>
<dbReference type="InterPro" id="IPR002676">
    <property type="entry name" value="RimM_N"/>
</dbReference>
<dbReference type="InterPro" id="IPR036976">
    <property type="entry name" value="RimM_N_sf"/>
</dbReference>
<dbReference type="InterPro" id="IPR009000">
    <property type="entry name" value="Transl_B-barrel_sf"/>
</dbReference>
<dbReference type="NCBIfam" id="TIGR02273">
    <property type="entry name" value="16S_RimM"/>
    <property type="match status" value="1"/>
</dbReference>
<dbReference type="PANTHER" id="PTHR33692">
    <property type="entry name" value="RIBOSOME MATURATION FACTOR RIMM"/>
    <property type="match status" value="1"/>
</dbReference>
<dbReference type="PANTHER" id="PTHR33692:SF1">
    <property type="entry name" value="RIBOSOME MATURATION FACTOR RIMM"/>
    <property type="match status" value="1"/>
</dbReference>
<dbReference type="Pfam" id="PF24986">
    <property type="entry name" value="PRC_RimM"/>
    <property type="match status" value="1"/>
</dbReference>
<dbReference type="Pfam" id="PF01782">
    <property type="entry name" value="RimM"/>
    <property type="match status" value="1"/>
</dbReference>
<dbReference type="SUPFAM" id="SSF50346">
    <property type="entry name" value="PRC-barrel domain"/>
    <property type="match status" value="1"/>
</dbReference>
<dbReference type="SUPFAM" id="SSF50447">
    <property type="entry name" value="Translation proteins"/>
    <property type="match status" value="1"/>
</dbReference>
<evidence type="ECO:0000255" key="1">
    <source>
        <dbReference type="HAMAP-Rule" id="MF_00014"/>
    </source>
</evidence>
<feature type="chain" id="PRO_1000089489" description="Ribosome maturation factor RimM">
    <location>
        <begin position="1"/>
        <end position="171"/>
    </location>
</feature>
<feature type="domain" description="PRC barrel" evidence="1">
    <location>
        <begin position="97"/>
        <end position="170"/>
    </location>
</feature>
<sequence>MINFNELIKVGNFNKSHGIKGEISFVFTNNFFFKGKNSFLICEMEGIFIPFRVESYRSISNSTVLVKLKNINTIEQTKLLTYQEVFLPKKQSAENTKLNYFSWDHYIGFNIIDEKNREIGSITDIDKSTINTLFIVEKESKEILIPTANEMIVTIDEKRKIIYMKLPVGLL</sequence>
<gene>
    <name evidence="1" type="primary">rimM</name>
    <name type="ordered locus">CFPG_463</name>
</gene>
<name>RIMM_AZOPC</name>
<accession>B6YRA4</accession>
<keyword id="KW-0143">Chaperone</keyword>
<keyword id="KW-0963">Cytoplasm</keyword>
<keyword id="KW-1185">Reference proteome</keyword>
<keyword id="KW-0690">Ribosome biogenesis</keyword>
<keyword id="KW-0698">rRNA processing</keyword>
<organism>
    <name type="scientific">Azobacteroides pseudotrichonymphae genomovar. CFP2</name>
    <dbReference type="NCBI Taxonomy" id="511995"/>
    <lineage>
        <taxon>Bacteria</taxon>
        <taxon>Pseudomonadati</taxon>
        <taxon>Bacteroidota</taxon>
        <taxon>Bacteroidia</taxon>
        <taxon>Bacteroidales</taxon>
        <taxon>Candidatus Azobacteroides</taxon>
    </lineage>
</organism>
<protein>
    <recommendedName>
        <fullName evidence="1">Ribosome maturation factor RimM</fullName>
    </recommendedName>
</protein>
<reference key="1">
    <citation type="journal article" date="2008" name="Science">
        <title>Genome of an endosymbiont coupling N2 fixation to cellulolysis within RT protist cells in termite gut.</title>
        <authorList>
            <person name="Hongoh Y."/>
            <person name="Sharma V.K."/>
            <person name="Prakash T."/>
            <person name="Noda S."/>
            <person name="Toh H."/>
            <person name="Taylor T.D."/>
            <person name="Kudo T."/>
            <person name="Sakaki Y."/>
            <person name="Toyoda A."/>
            <person name="Hattori M."/>
            <person name="Ohkuma M."/>
        </authorList>
    </citation>
    <scope>NUCLEOTIDE SEQUENCE [LARGE SCALE GENOMIC DNA]</scope>
</reference>